<keyword id="KW-1003">Cell membrane</keyword>
<keyword id="KW-0472">Membrane</keyword>
<keyword id="KW-1185">Reference proteome</keyword>
<keyword id="KW-0812">Transmembrane</keyword>
<keyword id="KW-1133">Transmembrane helix</keyword>
<evidence type="ECO:0000250" key="1">
    <source>
        <dbReference type="UniProtKB" id="A6NGC4"/>
    </source>
</evidence>
<evidence type="ECO:0000255" key="2"/>
<evidence type="ECO:0000255" key="3">
    <source>
        <dbReference type="PROSITE-ProRule" id="PRU00205"/>
    </source>
</evidence>
<evidence type="ECO:0000305" key="4"/>
<protein>
    <recommendedName>
        <fullName>TLC domain-containing protein 2</fullName>
    </recommendedName>
</protein>
<reference key="1">
    <citation type="submission" date="2007-11" db="EMBL/GenBank/DDBJ databases">
        <authorList>
            <consortium name="NIH - Zebrafish Gene Collection (ZGC) project"/>
        </authorList>
    </citation>
    <scope>NUCLEOTIDE SEQUENCE [LARGE SCALE MRNA]</scope>
    <source>
        <tissue>Kidney</tissue>
    </source>
</reference>
<dbReference type="EMBL" id="BC154828">
    <property type="protein sequence ID" value="AAI54829.1"/>
    <property type="molecule type" value="mRNA"/>
</dbReference>
<dbReference type="RefSeq" id="NP_001103852.1">
    <property type="nucleotide sequence ID" value="NM_001110382.1"/>
</dbReference>
<dbReference type="SMR" id="A8WGS4"/>
<dbReference type="FunCoup" id="A8WGS4">
    <property type="interactions" value="68"/>
</dbReference>
<dbReference type="PaxDb" id="7955-ENSDARP00000099595"/>
<dbReference type="Ensembl" id="ENSDART00000112079">
    <property type="protein sequence ID" value="ENSDARP00000099595"/>
    <property type="gene ID" value="ENSDARG00000077396"/>
</dbReference>
<dbReference type="GeneID" id="559420"/>
<dbReference type="KEGG" id="dre:559420"/>
<dbReference type="AGR" id="ZFIN:ZDB-GENE-080204-81"/>
<dbReference type="CTD" id="727910"/>
<dbReference type="ZFIN" id="ZDB-GENE-080204-81">
    <property type="gene designation" value="tlcd2"/>
</dbReference>
<dbReference type="eggNOG" id="KOG4474">
    <property type="taxonomic scope" value="Eukaryota"/>
</dbReference>
<dbReference type="HOGENOM" id="CLU_056440_2_1_1"/>
<dbReference type="InParanoid" id="A8WGS4"/>
<dbReference type="OMA" id="WMSLWLL"/>
<dbReference type="OrthoDB" id="10266980at2759"/>
<dbReference type="PhylomeDB" id="A8WGS4"/>
<dbReference type="TreeFam" id="TF315115"/>
<dbReference type="PRO" id="PR:A8WGS4"/>
<dbReference type="Proteomes" id="UP000000437">
    <property type="component" value="Chromosome 15"/>
</dbReference>
<dbReference type="Bgee" id="ENSDARG00000077396">
    <property type="expression patterns" value="Expressed in intestine and 25 other cell types or tissues"/>
</dbReference>
<dbReference type="GO" id="GO:0005886">
    <property type="term" value="C:plasma membrane"/>
    <property type="evidence" value="ECO:0000318"/>
    <property type="project" value="GO_Central"/>
</dbReference>
<dbReference type="GO" id="GO:0071709">
    <property type="term" value="P:membrane assembly"/>
    <property type="evidence" value="ECO:0000318"/>
    <property type="project" value="GO_Central"/>
</dbReference>
<dbReference type="GO" id="GO:0055091">
    <property type="term" value="P:phospholipid homeostasis"/>
    <property type="evidence" value="ECO:0000318"/>
    <property type="project" value="GO_Central"/>
</dbReference>
<dbReference type="GO" id="GO:0007009">
    <property type="term" value="P:plasma membrane organization"/>
    <property type="evidence" value="ECO:0000318"/>
    <property type="project" value="GO_Central"/>
</dbReference>
<dbReference type="GO" id="GO:0097035">
    <property type="term" value="P:regulation of membrane lipid distribution"/>
    <property type="evidence" value="ECO:0000318"/>
    <property type="project" value="GO_Central"/>
</dbReference>
<dbReference type="InterPro" id="IPR006634">
    <property type="entry name" value="TLC-dom"/>
</dbReference>
<dbReference type="InterPro" id="IPR050846">
    <property type="entry name" value="TLCD"/>
</dbReference>
<dbReference type="PANTHER" id="PTHR13439">
    <property type="entry name" value="CT120 PROTEIN"/>
    <property type="match status" value="1"/>
</dbReference>
<dbReference type="PANTHER" id="PTHR13439:SF2">
    <property type="entry name" value="TLC DOMAIN-CONTAINING PROTEIN 2"/>
    <property type="match status" value="1"/>
</dbReference>
<dbReference type="Pfam" id="PF03798">
    <property type="entry name" value="TRAM_LAG1_CLN8"/>
    <property type="match status" value="1"/>
</dbReference>
<dbReference type="SMART" id="SM00724">
    <property type="entry name" value="TLC"/>
    <property type="match status" value="1"/>
</dbReference>
<dbReference type="PROSITE" id="PS50922">
    <property type="entry name" value="TLC"/>
    <property type="match status" value="1"/>
</dbReference>
<organism>
    <name type="scientific">Danio rerio</name>
    <name type="common">Zebrafish</name>
    <name type="synonym">Brachydanio rerio</name>
    <dbReference type="NCBI Taxonomy" id="7955"/>
    <lineage>
        <taxon>Eukaryota</taxon>
        <taxon>Metazoa</taxon>
        <taxon>Chordata</taxon>
        <taxon>Craniata</taxon>
        <taxon>Vertebrata</taxon>
        <taxon>Euteleostomi</taxon>
        <taxon>Actinopterygii</taxon>
        <taxon>Neopterygii</taxon>
        <taxon>Teleostei</taxon>
        <taxon>Ostariophysi</taxon>
        <taxon>Cypriniformes</taxon>
        <taxon>Danionidae</taxon>
        <taxon>Danioninae</taxon>
        <taxon>Danio</taxon>
    </lineage>
</organism>
<gene>
    <name type="primary">tlcd2</name>
    <name type="ORF">zgc:175098</name>
</gene>
<proteinExistence type="evidence at transcript level"/>
<sequence>MELNSVILTTGSSVGFFKLVNYGLGKLPIPETARRNAWKWNNISTSFVHSLITGVWSVLCFCMHPQMAEDLIETHSVFSHALVSVSIGYFIYDFLDMVINQKIIHSWELLFHHVVVITCFGISVLTCRYVGFAVVALLVEINSVFLHLRQVLRMANLAKSTFYRVNSMINLGTYVVFRINTLAWMTRWLVLNRDLIPLFSYTIGSVGLAIMTAMNIVLFYRLMRSDFMKASREKELRKEKEKEKDM</sequence>
<name>TLCD2_DANRE</name>
<feature type="chain" id="PRO_0000328992" description="TLC domain-containing protein 2">
    <location>
        <begin position="1"/>
        <end position="246"/>
    </location>
</feature>
<feature type="transmembrane region" description="Helical" evidence="2">
    <location>
        <begin position="5"/>
        <end position="25"/>
    </location>
</feature>
<feature type="transmembrane region" description="Helical" evidence="2">
    <location>
        <begin position="43"/>
        <end position="63"/>
    </location>
</feature>
<feature type="transmembrane region" description="Helical" evidence="2">
    <location>
        <begin position="79"/>
        <end position="99"/>
    </location>
</feature>
<feature type="transmembrane region" description="Helical" evidence="2">
    <location>
        <begin position="107"/>
        <end position="127"/>
    </location>
</feature>
<feature type="transmembrane region" description="Helical" evidence="2">
    <location>
        <begin position="128"/>
        <end position="148"/>
    </location>
</feature>
<feature type="transmembrane region" description="Helical" evidence="2">
    <location>
        <begin position="199"/>
        <end position="219"/>
    </location>
</feature>
<feature type="domain" description="TLC" evidence="3">
    <location>
        <begin position="35"/>
        <end position="231"/>
    </location>
</feature>
<accession>A8WGS4</accession>
<comment type="function">
    <text evidence="1">Regulates the composition and fluidity of the plasma membrane (By similarity). Inhibits the incorporation of membrane-fluidizing phospholipids containing omega-3 long-chain polyunsaturated fatty acids (LCPUFA) and thereby promotes membrane rigidity (By similarity). Does not appear to have any effect on LCPUFA synthesis (By similarity).</text>
</comment>
<comment type="subcellular location">
    <subcellularLocation>
        <location evidence="1">Cell membrane</location>
        <topology evidence="4">Multi-pass membrane protein</topology>
    </subcellularLocation>
</comment>
<comment type="similarity">
    <text evidence="4">Belongs to the TLCD family.</text>
</comment>